<reference key="1">
    <citation type="journal article" date="2006" name="Genome Res.">
        <title>Massive genome erosion and functional adaptations provide insights into the symbiotic lifestyle of Sodalis glossinidius in the tsetse host.</title>
        <authorList>
            <person name="Toh H."/>
            <person name="Weiss B.L."/>
            <person name="Perkin S.A.H."/>
            <person name="Yamashita A."/>
            <person name="Oshima K."/>
            <person name="Hattori M."/>
            <person name="Aksoy S."/>
        </authorList>
    </citation>
    <scope>NUCLEOTIDE SEQUENCE [LARGE SCALE GENOMIC DNA]</scope>
    <source>
        <strain>morsitans</strain>
    </source>
</reference>
<dbReference type="EC" id="2.8.1.1" evidence="1"/>
<dbReference type="EMBL" id="AP008232">
    <property type="protein sequence ID" value="BAE75603.1"/>
    <property type="molecule type" value="Genomic_DNA"/>
</dbReference>
<dbReference type="RefSeq" id="WP_011412135.1">
    <property type="nucleotide sequence ID" value="NC_007712.1"/>
</dbReference>
<dbReference type="SMR" id="Q2NQH2"/>
<dbReference type="STRING" id="343509.SG2328"/>
<dbReference type="KEGG" id="sgl:SG2328"/>
<dbReference type="eggNOG" id="COG0607">
    <property type="taxonomic scope" value="Bacteria"/>
</dbReference>
<dbReference type="HOGENOM" id="CLU_089574_14_0_6"/>
<dbReference type="OrthoDB" id="9811849at2"/>
<dbReference type="BioCyc" id="SGLO343509:SGP1_RS21190-MONOMER"/>
<dbReference type="Proteomes" id="UP000001932">
    <property type="component" value="Chromosome"/>
</dbReference>
<dbReference type="GO" id="GO:0005737">
    <property type="term" value="C:cytoplasm"/>
    <property type="evidence" value="ECO:0007669"/>
    <property type="project" value="UniProtKB-SubCell"/>
</dbReference>
<dbReference type="GO" id="GO:0004792">
    <property type="term" value="F:thiosulfate-cyanide sulfurtransferase activity"/>
    <property type="evidence" value="ECO:0007669"/>
    <property type="project" value="UniProtKB-UniRule"/>
</dbReference>
<dbReference type="GO" id="GO:0006071">
    <property type="term" value="P:glycerol metabolic process"/>
    <property type="evidence" value="ECO:0007669"/>
    <property type="project" value="UniProtKB-UniRule"/>
</dbReference>
<dbReference type="CDD" id="cd01444">
    <property type="entry name" value="GlpE_ST"/>
    <property type="match status" value="1"/>
</dbReference>
<dbReference type="Gene3D" id="3.40.250.10">
    <property type="entry name" value="Rhodanese-like domain"/>
    <property type="match status" value="1"/>
</dbReference>
<dbReference type="HAMAP" id="MF_01009">
    <property type="entry name" value="Thiosulf_sulfurtr"/>
    <property type="match status" value="1"/>
</dbReference>
<dbReference type="InterPro" id="IPR050229">
    <property type="entry name" value="GlpE_sulfurtransferase"/>
</dbReference>
<dbReference type="InterPro" id="IPR001763">
    <property type="entry name" value="Rhodanese-like_dom"/>
</dbReference>
<dbReference type="InterPro" id="IPR036873">
    <property type="entry name" value="Rhodanese-like_dom_sf"/>
</dbReference>
<dbReference type="InterPro" id="IPR023695">
    <property type="entry name" value="Thiosulf_sulfurTrfase"/>
</dbReference>
<dbReference type="NCBIfam" id="NF001195">
    <property type="entry name" value="PRK00162.1"/>
    <property type="match status" value="1"/>
</dbReference>
<dbReference type="PANTHER" id="PTHR43031">
    <property type="entry name" value="FAD-DEPENDENT OXIDOREDUCTASE"/>
    <property type="match status" value="1"/>
</dbReference>
<dbReference type="PANTHER" id="PTHR43031:SF6">
    <property type="entry name" value="THIOSULFATE SULFURTRANSFERASE GLPE"/>
    <property type="match status" value="1"/>
</dbReference>
<dbReference type="Pfam" id="PF00581">
    <property type="entry name" value="Rhodanese"/>
    <property type="match status" value="1"/>
</dbReference>
<dbReference type="SMART" id="SM00450">
    <property type="entry name" value="RHOD"/>
    <property type="match status" value="1"/>
</dbReference>
<dbReference type="SUPFAM" id="SSF52821">
    <property type="entry name" value="Rhodanese/Cell cycle control phosphatase"/>
    <property type="match status" value="1"/>
</dbReference>
<dbReference type="PROSITE" id="PS50206">
    <property type="entry name" value="RHODANESE_3"/>
    <property type="match status" value="1"/>
</dbReference>
<sequence length="107" mass="11853">MDQFATISMEQARERWRQGEAVLVDIRDPQSFAAGHLRGAFHLTNDTLPAFLAQHDLARPVMVLCYHGNSSKGAAQYLLTQGVEVAYSVDGGFDAWLKAFPLETESL</sequence>
<accession>Q2NQH2</accession>
<protein>
    <recommendedName>
        <fullName evidence="1">Thiosulfate sulfurtransferase GlpE</fullName>
        <ecNumber evidence="1">2.8.1.1</ecNumber>
    </recommendedName>
</protein>
<comment type="function">
    <text evidence="1">Transferase that catalyzes the transfer of sulfur from thiosulfate to thiophilic acceptors such as cyanide or dithiols. May function in a CysM-independent thiosulfate assimilation pathway by catalyzing the conversion of thiosulfate to sulfite, which can then be used for L-cysteine biosynthesis.</text>
</comment>
<comment type="catalytic activity">
    <reaction evidence="1">
        <text>thiosulfate + hydrogen cyanide = thiocyanate + sulfite + 2 H(+)</text>
        <dbReference type="Rhea" id="RHEA:16881"/>
        <dbReference type="ChEBI" id="CHEBI:15378"/>
        <dbReference type="ChEBI" id="CHEBI:17359"/>
        <dbReference type="ChEBI" id="CHEBI:18022"/>
        <dbReference type="ChEBI" id="CHEBI:18407"/>
        <dbReference type="ChEBI" id="CHEBI:33542"/>
        <dbReference type="EC" id="2.8.1.1"/>
    </reaction>
</comment>
<comment type="catalytic activity">
    <reaction evidence="1">
        <text>thiosulfate + [thioredoxin]-dithiol = [thioredoxin]-disulfide + hydrogen sulfide + sulfite + 2 H(+)</text>
        <dbReference type="Rhea" id="RHEA:83859"/>
        <dbReference type="Rhea" id="RHEA-COMP:10698"/>
        <dbReference type="Rhea" id="RHEA-COMP:10700"/>
        <dbReference type="ChEBI" id="CHEBI:15378"/>
        <dbReference type="ChEBI" id="CHEBI:17359"/>
        <dbReference type="ChEBI" id="CHEBI:29919"/>
        <dbReference type="ChEBI" id="CHEBI:29950"/>
        <dbReference type="ChEBI" id="CHEBI:33542"/>
        <dbReference type="ChEBI" id="CHEBI:50058"/>
    </reaction>
</comment>
<comment type="subcellular location">
    <subcellularLocation>
        <location evidence="1">Cytoplasm</location>
    </subcellularLocation>
</comment>
<comment type="similarity">
    <text evidence="1">Belongs to the GlpE family.</text>
</comment>
<evidence type="ECO:0000255" key="1">
    <source>
        <dbReference type="HAMAP-Rule" id="MF_01009"/>
    </source>
</evidence>
<organism>
    <name type="scientific">Sodalis glossinidius (strain morsitans)</name>
    <dbReference type="NCBI Taxonomy" id="343509"/>
    <lineage>
        <taxon>Bacteria</taxon>
        <taxon>Pseudomonadati</taxon>
        <taxon>Pseudomonadota</taxon>
        <taxon>Gammaproteobacteria</taxon>
        <taxon>Enterobacterales</taxon>
        <taxon>Bruguierivoracaceae</taxon>
        <taxon>Sodalis</taxon>
    </lineage>
</organism>
<feature type="chain" id="PRO_1000062981" description="Thiosulfate sulfurtransferase GlpE">
    <location>
        <begin position="1"/>
        <end position="107"/>
    </location>
</feature>
<feature type="domain" description="Rhodanese" evidence="1">
    <location>
        <begin position="17"/>
        <end position="105"/>
    </location>
</feature>
<feature type="active site" description="Cysteine persulfide intermediate" evidence="1">
    <location>
        <position position="65"/>
    </location>
</feature>
<proteinExistence type="inferred from homology"/>
<keyword id="KW-0963">Cytoplasm</keyword>
<keyword id="KW-0808">Transferase</keyword>
<gene>
    <name evidence="1" type="primary">glpE</name>
    <name type="ordered locus">SG2328</name>
</gene>
<name>GLPE_SODGM</name>